<feature type="signal peptide" evidence="1">
    <location>
        <begin position="1"/>
        <end position="23"/>
    </location>
</feature>
<feature type="chain" id="PRO_0000041484" description="Cell wall integrity and stress response component 2">
    <location>
        <begin position="24"/>
        <end position="503"/>
    </location>
</feature>
<feature type="topological domain" description="Extracellular" evidence="1">
    <location>
        <begin position="24"/>
        <end position="325"/>
    </location>
</feature>
<feature type="transmembrane region" description="Helical" evidence="1">
    <location>
        <begin position="326"/>
        <end position="346"/>
    </location>
</feature>
<feature type="topological domain" description="Cytoplasmic" evidence="1">
    <location>
        <begin position="347"/>
        <end position="503"/>
    </location>
</feature>
<feature type="domain" description="WSC" evidence="2">
    <location>
        <begin position="25"/>
        <end position="118"/>
    </location>
</feature>
<feature type="region of interest" description="Disordered" evidence="3">
    <location>
        <begin position="124"/>
        <end position="260"/>
    </location>
</feature>
<feature type="region of interest" description="Disordered" evidence="3">
    <location>
        <begin position="470"/>
        <end position="503"/>
    </location>
</feature>
<feature type="modified residue" description="Phosphothreonine" evidence="6">
    <location>
        <position position="402"/>
    </location>
</feature>
<feature type="modified residue" description="Phosphoserine" evidence="5 6">
    <location>
        <position position="455"/>
    </location>
</feature>
<feature type="modified residue" description="Phosphoserine" evidence="5 6">
    <location>
        <position position="458"/>
    </location>
</feature>
<protein>
    <recommendedName>
        <fullName>Cell wall integrity and stress response component 2</fullName>
    </recommendedName>
</protein>
<comment type="subcellular location">
    <subcellularLocation>
        <location>Cell membrane</location>
        <topology>Single-pass membrane protein</topology>
    </subcellularLocation>
</comment>
<comment type="PTM">
    <text evidence="4">N-glycosylated.</text>
</comment>
<reference key="1">
    <citation type="journal article" date="1997" name="Nature">
        <title>The nucleotide sequence of Saccharomyces cerevisiae chromosome XIV and its evolutionary implications.</title>
        <authorList>
            <person name="Philippsen P."/>
            <person name="Kleine K."/>
            <person name="Poehlmann R."/>
            <person name="Duesterhoeft A."/>
            <person name="Hamberg K."/>
            <person name="Hegemann J.H."/>
            <person name="Obermaier B."/>
            <person name="Urrestarazu L.A."/>
            <person name="Aert R."/>
            <person name="Albermann K."/>
            <person name="Altmann R."/>
            <person name="Andre B."/>
            <person name="Baladron V."/>
            <person name="Ballesta J.P.G."/>
            <person name="Becam A.-M."/>
            <person name="Beinhauer J.D."/>
            <person name="Boskovic J."/>
            <person name="Buitrago M.J."/>
            <person name="Bussereau F."/>
            <person name="Coster F."/>
            <person name="Crouzet M."/>
            <person name="D'Angelo M."/>
            <person name="Dal Pero F."/>
            <person name="De Antoni A."/>
            <person name="del Rey F."/>
            <person name="Doignon F."/>
            <person name="Domdey H."/>
            <person name="Dubois E."/>
            <person name="Fiedler T.A."/>
            <person name="Fleig U."/>
            <person name="Floeth M."/>
            <person name="Fritz C."/>
            <person name="Gaillardin C."/>
            <person name="Garcia-Cantalejo J.M."/>
            <person name="Glansdorff N."/>
            <person name="Goffeau A."/>
            <person name="Gueldener U."/>
            <person name="Herbert C.J."/>
            <person name="Heumann K."/>
            <person name="Heuss-Neitzel D."/>
            <person name="Hilbert H."/>
            <person name="Hinni K."/>
            <person name="Iraqui Houssaini I."/>
            <person name="Jacquet M."/>
            <person name="Jimenez A."/>
            <person name="Jonniaux J.-L."/>
            <person name="Karpfinger-Hartl L."/>
            <person name="Lanfranchi G."/>
            <person name="Lepingle A."/>
            <person name="Levesque H."/>
            <person name="Lyck R."/>
            <person name="Maftahi M."/>
            <person name="Mallet L."/>
            <person name="Maurer C.T.C."/>
            <person name="Messenguy F."/>
            <person name="Mewes H.-W."/>
            <person name="Moestl D."/>
            <person name="Nasr F."/>
            <person name="Nicaud J.-M."/>
            <person name="Niedenthal R.K."/>
            <person name="Pandolfo D."/>
            <person name="Pierard A."/>
            <person name="Piravandi E."/>
            <person name="Planta R.J."/>
            <person name="Pohl T.M."/>
            <person name="Purnelle B."/>
            <person name="Rebischung C."/>
            <person name="Remacha M.A."/>
            <person name="Revuelta J.L."/>
            <person name="Rinke M."/>
            <person name="Saiz J.E."/>
            <person name="Sartorello F."/>
            <person name="Scherens B."/>
            <person name="Sen-Gupta M."/>
            <person name="Soler-Mira A."/>
            <person name="Urbanus J.H.M."/>
            <person name="Valle G."/>
            <person name="Van Dyck L."/>
            <person name="Verhasselt P."/>
            <person name="Vierendeels F."/>
            <person name="Vissers S."/>
            <person name="Voet M."/>
            <person name="Volckaert G."/>
            <person name="Wach A."/>
            <person name="Wambutt R."/>
            <person name="Wedler H."/>
            <person name="Zollner A."/>
            <person name="Hani J."/>
        </authorList>
    </citation>
    <scope>NUCLEOTIDE SEQUENCE [LARGE SCALE GENOMIC DNA]</scope>
    <source>
        <strain>ATCC 204508 / S288c</strain>
    </source>
</reference>
<reference key="2">
    <citation type="journal article" date="2014" name="G3 (Bethesda)">
        <title>The reference genome sequence of Saccharomyces cerevisiae: Then and now.</title>
        <authorList>
            <person name="Engel S.R."/>
            <person name="Dietrich F.S."/>
            <person name="Fisk D.G."/>
            <person name="Binkley G."/>
            <person name="Balakrishnan R."/>
            <person name="Costanzo M.C."/>
            <person name="Dwight S.S."/>
            <person name="Hitz B.C."/>
            <person name="Karra K."/>
            <person name="Nash R.S."/>
            <person name="Weng S."/>
            <person name="Wong E.D."/>
            <person name="Lloyd P."/>
            <person name="Skrzypek M.S."/>
            <person name="Miyasato S.R."/>
            <person name="Simison M."/>
            <person name="Cherry J.M."/>
        </authorList>
    </citation>
    <scope>GENOME REANNOTATION</scope>
    <source>
        <strain>ATCC 204508 / S288c</strain>
    </source>
</reference>
<reference key="3">
    <citation type="journal article" date="2007" name="J. Proteome Res.">
        <title>Large-scale phosphorylation analysis of alpha-factor-arrested Saccharomyces cerevisiae.</title>
        <authorList>
            <person name="Li X."/>
            <person name="Gerber S.A."/>
            <person name="Rudner A.D."/>
            <person name="Beausoleil S.A."/>
            <person name="Haas W."/>
            <person name="Villen J."/>
            <person name="Elias J.E."/>
            <person name="Gygi S.P."/>
        </authorList>
    </citation>
    <scope>PHOSPHORYLATION [LARGE SCALE ANALYSIS] AT SER-455 AND SER-458</scope>
    <scope>IDENTIFICATION BY MASS SPECTROMETRY [LARGE SCALE ANALYSIS]</scope>
    <source>
        <strain>ADR376</strain>
    </source>
</reference>
<reference key="4">
    <citation type="journal article" date="2008" name="Mol. Cell. Proteomics">
        <title>A multidimensional chromatography technology for in-depth phosphoproteome analysis.</title>
        <authorList>
            <person name="Albuquerque C.P."/>
            <person name="Smolka M.B."/>
            <person name="Payne S.H."/>
            <person name="Bafna V."/>
            <person name="Eng J."/>
            <person name="Zhou H."/>
        </authorList>
    </citation>
    <scope>IDENTIFICATION BY MASS SPECTROMETRY [LARGE SCALE ANALYSIS]</scope>
</reference>
<reference key="5">
    <citation type="journal article" date="2009" name="Mol. Syst. Biol.">
        <title>Global analysis of the glycoproteome in Saccharomyces cerevisiae reveals new roles for protein glycosylation in eukaryotes.</title>
        <authorList>
            <person name="Kung L.A."/>
            <person name="Tao S.-C."/>
            <person name="Qian J."/>
            <person name="Smith M.G."/>
            <person name="Snyder M."/>
            <person name="Zhu H."/>
        </authorList>
    </citation>
    <scope>GLYCOSYLATION [LARGE SCALE ANALYSIS]</scope>
</reference>
<reference key="6">
    <citation type="journal article" date="2009" name="Science">
        <title>Global analysis of Cdk1 substrate phosphorylation sites provides insights into evolution.</title>
        <authorList>
            <person name="Holt L.J."/>
            <person name="Tuch B.B."/>
            <person name="Villen J."/>
            <person name="Johnson A.D."/>
            <person name="Gygi S.P."/>
            <person name="Morgan D.O."/>
        </authorList>
    </citation>
    <scope>PHOSPHORYLATION [LARGE SCALE ANALYSIS] AT THR-402; SER-455 AND SER-458</scope>
    <scope>IDENTIFICATION BY MASS SPECTROMETRY [LARGE SCALE ANALYSIS]</scope>
</reference>
<evidence type="ECO:0000255" key="1"/>
<evidence type="ECO:0000255" key="2">
    <source>
        <dbReference type="PROSITE-ProRule" id="PRU00558"/>
    </source>
</evidence>
<evidence type="ECO:0000256" key="3">
    <source>
        <dbReference type="SAM" id="MobiDB-lite"/>
    </source>
</evidence>
<evidence type="ECO:0000269" key="4">
    <source>
    </source>
</evidence>
<evidence type="ECO:0007744" key="5">
    <source>
    </source>
</evidence>
<evidence type="ECO:0007744" key="6">
    <source>
    </source>
</evidence>
<proteinExistence type="evidence at protein level"/>
<name>WSC2_YEAST</name>
<accession>P53832</accession>
<accession>D6W0R1</accession>
<keyword id="KW-1003">Cell membrane</keyword>
<keyword id="KW-0961">Cell wall biogenesis/degradation</keyword>
<keyword id="KW-0325">Glycoprotein</keyword>
<keyword id="KW-0472">Membrane</keyword>
<keyword id="KW-0597">Phosphoprotein</keyword>
<keyword id="KW-1185">Reference proteome</keyword>
<keyword id="KW-0732">Signal</keyword>
<keyword id="KW-0812">Transmembrane</keyword>
<keyword id="KW-1133">Transmembrane helix</keyword>
<organism>
    <name type="scientific">Saccharomyces cerevisiae (strain ATCC 204508 / S288c)</name>
    <name type="common">Baker's yeast</name>
    <dbReference type="NCBI Taxonomy" id="559292"/>
    <lineage>
        <taxon>Eukaryota</taxon>
        <taxon>Fungi</taxon>
        <taxon>Dikarya</taxon>
        <taxon>Ascomycota</taxon>
        <taxon>Saccharomycotina</taxon>
        <taxon>Saccharomycetes</taxon>
        <taxon>Saccharomycetales</taxon>
        <taxon>Saccharomycetaceae</taxon>
        <taxon>Saccharomyces</taxon>
    </lineage>
</organism>
<dbReference type="EMBL" id="Z71559">
    <property type="protein sequence ID" value="CAA96195.1"/>
    <property type="molecule type" value="Genomic_DNA"/>
</dbReference>
<dbReference type="EMBL" id="BK006947">
    <property type="protein sequence ID" value="DAA10277.1"/>
    <property type="molecule type" value="Genomic_DNA"/>
</dbReference>
<dbReference type="PIR" id="S63257">
    <property type="entry name" value="S63257"/>
</dbReference>
<dbReference type="RefSeq" id="NP_014116.1">
    <property type="nucleotide sequence ID" value="NM_001183121.1"/>
</dbReference>
<dbReference type="SMR" id="P53832"/>
<dbReference type="BioGRID" id="35558">
    <property type="interactions" value="122"/>
</dbReference>
<dbReference type="FunCoup" id="P53832">
    <property type="interactions" value="206"/>
</dbReference>
<dbReference type="IntAct" id="P53832">
    <property type="interactions" value="18"/>
</dbReference>
<dbReference type="MINT" id="P53832"/>
<dbReference type="STRING" id="4932.YNL283C"/>
<dbReference type="iPTMnet" id="P53832"/>
<dbReference type="PaxDb" id="4932-YNL283C"/>
<dbReference type="PeptideAtlas" id="P53832"/>
<dbReference type="EnsemblFungi" id="YNL283C_mRNA">
    <property type="protein sequence ID" value="YNL283C"/>
    <property type="gene ID" value="YNL283C"/>
</dbReference>
<dbReference type="GeneID" id="855438"/>
<dbReference type="KEGG" id="sce:YNL283C"/>
<dbReference type="AGR" id="SGD:S000005227"/>
<dbReference type="SGD" id="S000005227">
    <property type="gene designation" value="WSC2"/>
</dbReference>
<dbReference type="VEuPathDB" id="FungiDB:YNL283C"/>
<dbReference type="eggNOG" id="KOG4157">
    <property type="taxonomic scope" value="Eukaryota"/>
</dbReference>
<dbReference type="GeneTree" id="ENSGT00940000176584"/>
<dbReference type="HOGENOM" id="CLU_024893_1_0_1"/>
<dbReference type="InParanoid" id="P53832"/>
<dbReference type="OMA" id="DAHNISK"/>
<dbReference type="OrthoDB" id="2019572at2759"/>
<dbReference type="BioCyc" id="YEAST:G3O-33274-MONOMER"/>
<dbReference type="BioGRID-ORCS" id="855438">
    <property type="hits" value="1 hit in 10 CRISPR screens"/>
</dbReference>
<dbReference type="PRO" id="PR:P53832"/>
<dbReference type="Proteomes" id="UP000002311">
    <property type="component" value="Chromosome XIV"/>
</dbReference>
<dbReference type="RNAct" id="P53832">
    <property type="molecule type" value="protein"/>
</dbReference>
<dbReference type="GO" id="GO:0005933">
    <property type="term" value="C:cellular bud"/>
    <property type="evidence" value="ECO:0000314"/>
    <property type="project" value="SGD"/>
</dbReference>
<dbReference type="GO" id="GO:0005935">
    <property type="term" value="C:cellular bud neck"/>
    <property type="evidence" value="ECO:0000314"/>
    <property type="project" value="SGD"/>
</dbReference>
<dbReference type="GO" id="GO:0005737">
    <property type="term" value="C:cytoplasm"/>
    <property type="evidence" value="ECO:0007005"/>
    <property type="project" value="SGD"/>
</dbReference>
<dbReference type="GO" id="GO:0000324">
    <property type="term" value="C:fungal-type vacuole"/>
    <property type="evidence" value="ECO:0007005"/>
    <property type="project" value="SGD"/>
</dbReference>
<dbReference type="GO" id="GO:0043332">
    <property type="term" value="C:mating projection tip"/>
    <property type="evidence" value="ECO:0007005"/>
    <property type="project" value="SGD"/>
</dbReference>
<dbReference type="GO" id="GO:0005886">
    <property type="term" value="C:plasma membrane"/>
    <property type="evidence" value="ECO:0000314"/>
    <property type="project" value="SGD"/>
</dbReference>
<dbReference type="GO" id="GO:0030427">
    <property type="term" value="C:site of polarized growth"/>
    <property type="evidence" value="ECO:0000314"/>
    <property type="project" value="SGD"/>
</dbReference>
<dbReference type="GO" id="GO:0004888">
    <property type="term" value="F:transmembrane signaling receptor activity"/>
    <property type="evidence" value="ECO:0000315"/>
    <property type="project" value="SGD"/>
</dbReference>
<dbReference type="GO" id="GO:0031505">
    <property type="term" value="P:fungal-type cell wall organization"/>
    <property type="evidence" value="ECO:0000315"/>
    <property type="project" value="SGD"/>
</dbReference>
<dbReference type="GO" id="GO:0009408">
    <property type="term" value="P:response to heat"/>
    <property type="evidence" value="ECO:0000315"/>
    <property type="project" value="SGD"/>
</dbReference>
<dbReference type="GO" id="GO:0007266">
    <property type="term" value="P:Rho protein signal transduction"/>
    <property type="evidence" value="ECO:0000315"/>
    <property type="project" value="SGD"/>
</dbReference>
<dbReference type="InterPro" id="IPR051694">
    <property type="entry name" value="Immunoregulatory_rcpt-like"/>
</dbReference>
<dbReference type="InterPro" id="IPR002889">
    <property type="entry name" value="WSC_carb-bd"/>
</dbReference>
<dbReference type="PANTHER" id="PTHR15549:SF26">
    <property type="entry name" value="AXIAL BUDDING PATTERN PROTEIN 2-RELATED"/>
    <property type="match status" value="1"/>
</dbReference>
<dbReference type="PANTHER" id="PTHR15549">
    <property type="entry name" value="PAIRED IMMUNOGLOBULIN-LIKE TYPE 2 RECEPTOR"/>
    <property type="match status" value="1"/>
</dbReference>
<dbReference type="Pfam" id="PF01822">
    <property type="entry name" value="WSC"/>
    <property type="match status" value="1"/>
</dbReference>
<dbReference type="SMART" id="SM00321">
    <property type="entry name" value="WSC"/>
    <property type="match status" value="1"/>
</dbReference>
<dbReference type="PROSITE" id="PS51212">
    <property type="entry name" value="WSC"/>
    <property type="match status" value="1"/>
</dbReference>
<sequence>MHLDLIHKSFILVWLIYIRAALADQFTYKACYSASDIRKLGLTYKGVYEYQSVSYCQNECPGQAVVALFNGTGCYCGGSVAQLQSLTQVDSSKCDVSCAGWPYQNCGGSSAMNVYINNAASTADSTSSTATSTSTTSSSSTSVSSKTSTKLDTKTSTSSSATHSSSSSSTTSTTTSSSETTTSSSSSSSSSSTSTTSTTSTTSSTTSTSSSPSTTSSSTSASSSSETSSTQATSSSTTSTSSSTSTATVTSTPSSTSIGTSTHYTTRVVTQSVVSQANQQASTIFTTRTSVYATVSSTSSSTSSLLNGKSSSSKSKGLSGGAIAGVVVGVVCGTVALLALALFFFVWKKRRQSSQHVDLEETKQYQPYSLGDADANPVIPPSASSTNWHIPSRNNTALSKNTASTFATYDLPTRAPGGRDSIITGDAHNISKRSHFPSVVYEEPPSIYNGNQRFSATSLPDMMEERQLHIVNPDNVSSNIGSNVSDGDDDYDDAKDSNNSSLR</sequence>
<gene>
    <name type="primary">WSC2</name>
    <name type="ordered locus">YNL283C</name>
    <name type="ORF">N0583</name>
</gene>